<protein>
    <recommendedName>
        <fullName evidence="1">Sec-independent protein translocase protein TatC</fullName>
    </recommendedName>
</protein>
<dbReference type="EMBL" id="CP001071">
    <property type="protein sequence ID" value="ACD05703.1"/>
    <property type="molecule type" value="Genomic_DNA"/>
</dbReference>
<dbReference type="SMR" id="B2UN92"/>
<dbReference type="STRING" id="349741.Amuc_1889"/>
<dbReference type="PaxDb" id="349741-Amuc_1889"/>
<dbReference type="KEGG" id="amu:Amuc_1889"/>
<dbReference type="eggNOG" id="COG0805">
    <property type="taxonomic scope" value="Bacteria"/>
</dbReference>
<dbReference type="HOGENOM" id="CLU_796048_0_0_0"/>
<dbReference type="Proteomes" id="UP000001031">
    <property type="component" value="Chromosome"/>
</dbReference>
<dbReference type="GO" id="GO:0033281">
    <property type="term" value="C:TAT protein transport complex"/>
    <property type="evidence" value="ECO:0007669"/>
    <property type="project" value="UniProtKB-UniRule"/>
</dbReference>
<dbReference type="GO" id="GO:0009977">
    <property type="term" value="F:proton motive force dependent protein transmembrane transporter activity"/>
    <property type="evidence" value="ECO:0007669"/>
    <property type="project" value="TreeGrafter"/>
</dbReference>
<dbReference type="GO" id="GO:0065002">
    <property type="term" value="P:intracellular protein transmembrane transport"/>
    <property type="evidence" value="ECO:0007669"/>
    <property type="project" value="TreeGrafter"/>
</dbReference>
<dbReference type="GO" id="GO:0043953">
    <property type="term" value="P:protein transport by the Tat complex"/>
    <property type="evidence" value="ECO:0007669"/>
    <property type="project" value="UniProtKB-UniRule"/>
</dbReference>
<dbReference type="HAMAP" id="MF_00902">
    <property type="entry name" value="TatC"/>
    <property type="match status" value="1"/>
</dbReference>
<dbReference type="InterPro" id="IPR002033">
    <property type="entry name" value="TatC"/>
</dbReference>
<dbReference type="NCBIfam" id="TIGR00945">
    <property type="entry name" value="tatC"/>
    <property type="match status" value="1"/>
</dbReference>
<dbReference type="PANTHER" id="PTHR30371">
    <property type="entry name" value="SEC-INDEPENDENT PROTEIN TRANSLOCASE PROTEIN TATC"/>
    <property type="match status" value="1"/>
</dbReference>
<dbReference type="PANTHER" id="PTHR30371:SF0">
    <property type="entry name" value="SEC-INDEPENDENT PROTEIN TRANSLOCASE PROTEIN TATC, CHLOROPLASTIC-RELATED"/>
    <property type="match status" value="1"/>
</dbReference>
<dbReference type="Pfam" id="PF00902">
    <property type="entry name" value="TatC"/>
    <property type="match status" value="1"/>
</dbReference>
<dbReference type="PRINTS" id="PR01840">
    <property type="entry name" value="TATCFAMILY"/>
</dbReference>
<evidence type="ECO:0000255" key="1">
    <source>
        <dbReference type="HAMAP-Rule" id="MF_00902"/>
    </source>
</evidence>
<accession>B2UN92</accession>
<feature type="chain" id="PRO_0000412858" description="Sec-independent protein translocase protein TatC">
    <location>
        <begin position="1"/>
        <end position="348"/>
    </location>
</feature>
<feature type="transmembrane region" description="Helical" evidence="1">
    <location>
        <begin position="7"/>
        <end position="27"/>
    </location>
</feature>
<feature type="transmembrane region" description="Helical" evidence="1">
    <location>
        <begin position="162"/>
        <end position="182"/>
    </location>
</feature>
<feature type="transmembrane region" description="Helical" evidence="1">
    <location>
        <begin position="192"/>
        <end position="212"/>
    </location>
</feature>
<feature type="transmembrane region" description="Helical" evidence="1">
    <location>
        <begin position="244"/>
        <end position="264"/>
    </location>
</feature>
<feature type="transmembrane region" description="Helical" evidence="1">
    <location>
        <begin position="278"/>
        <end position="298"/>
    </location>
</feature>
<feature type="transmembrane region" description="Helical" evidence="1">
    <location>
        <begin position="299"/>
        <end position="319"/>
    </location>
</feature>
<organism>
    <name type="scientific">Akkermansia muciniphila (strain ATCC BAA-835 / DSM 22959 / JCM 33894 / BCRC 81048 / CCUG 64013 / CIP 107961 / Muc)</name>
    <dbReference type="NCBI Taxonomy" id="349741"/>
    <lineage>
        <taxon>Bacteria</taxon>
        <taxon>Pseudomonadati</taxon>
        <taxon>Verrucomicrobiota</taxon>
        <taxon>Verrucomicrobiia</taxon>
        <taxon>Verrucomicrobiales</taxon>
        <taxon>Akkermansiaceae</taxon>
        <taxon>Akkermansia</taxon>
    </lineage>
</organism>
<keyword id="KW-1003">Cell membrane</keyword>
<keyword id="KW-0472">Membrane</keyword>
<keyword id="KW-0653">Protein transport</keyword>
<keyword id="KW-1185">Reference proteome</keyword>
<keyword id="KW-0811">Translocation</keyword>
<keyword id="KW-0812">Transmembrane</keyword>
<keyword id="KW-1133">Transmembrane helix</keyword>
<keyword id="KW-0813">Transport</keyword>
<gene>
    <name evidence="1" type="primary">tatC</name>
    <name type="ordered locus">Amuc_1889</name>
</gene>
<proteinExistence type="inferred from homology"/>
<reference key="1">
    <citation type="journal article" date="2011" name="PLoS ONE">
        <title>The genome of Akkermansia muciniphila, a dedicated intestinal mucin degrader, and its use in exploring intestinal metagenomes.</title>
        <authorList>
            <person name="van Passel M.W."/>
            <person name="Kant R."/>
            <person name="Zoetendal E.G."/>
            <person name="Plugge C.M."/>
            <person name="Derrien M."/>
            <person name="Malfatti S.A."/>
            <person name="Chain P.S."/>
            <person name="Woyke T."/>
            <person name="Palva A."/>
            <person name="de Vos W.M."/>
            <person name="Smidt H."/>
        </authorList>
    </citation>
    <scope>NUCLEOTIDE SEQUENCE [LARGE SCALE GENOMIC DNA]</scope>
    <source>
        <strain>ATCC BAA-835 / DSM 22959 / JCM 33894 / BCRC 81048 / CCUG 64013 / CIP 107961 / Muc</strain>
    </source>
</reference>
<sequence length="348" mass="38944">MLLRMALCLTVSTILCAGFASNLMDILRRPVNQVWDMFEESHLPAGIGLDAWSKAKEMATAMTSLGASQRALFLRQVSPSQADLTEAALVLRGAQPLPEDRKQVFIREGSPSTAVRDLAEALYSKGAVLADGTGRGALKMMSAFQPGEAFMLTIKLSLYAGVVISFPLLLYFLLQFIIPGLLEHERKLLYKCMAVGFGLFLAGTLFCYFIVLPRVLTFFYTYSLEFGISNEWRIGYYLSFATQMILMFGLAFELPVVVMPFVKLGVLTYDMMKSTRRYAIVAIAVLAAVITPTPDVATMMLMAVPMYALYEICIILAWMHERKEAARTREEIARFEEDFNNNNSPYNQ</sequence>
<name>TATC_AKKM8</name>
<comment type="function">
    <text evidence="1">Part of the twin-arginine translocation (Tat) system that transports large folded proteins containing a characteristic twin-arginine motif in their signal peptide across membranes.</text>
</comment>
<comment type="subunit">
    <text evidence="1">Forms a complex with TatA.</text>
</comment>
<comment type="subcellular location">
    <subcellularLocation>
        <location evidence="1">Cell membrane</location>
        <topology evidence="1">Multi-pass membrane protein</topology>
    </subcellularLocation>
</comment>
<comment type="similarity">
    <text evidence="1">Belongs to the TatC family.</text>
</comment>